<dbReference type="EC" id="2.2.1.2" evidence="1"/>
<dbReference type="EMBL" id="CP000492">
    <property type="protein sequence ID" value="ABL66682.1"/>
    <property type="molecule type" value="Genomic_DNA"/>
</dbReference>
<dbReference type="RefSeq" id="WP_015961209.1">
    <property type="nucleotide sequence ID" value="NC_008639.1"/>
</dbReference>
<dbReference type="SMR" id="A1BJV5"/>
<dbReference type="STRING" id="290317.Cpha266_2698"/>
<dbReference type="KEGG" id="cph:Cpha266_2698"/>
<dbReference type="eggNOG" id="COG0176">
    <property type="taxonomic scope" value="Bacteria"/>
</dbReference>
<dbReference type="HOGENOM" id="CLU_079764_0_0_10"/>
<dbReference type="OrthoDB" id="9807051at2"/>
<dbReference type="UniPathway" id="UPA00115">
    <property type="reaction ID" value="UER00414"/>
</dbReference>
<dbReference type="Proteomes" id="UP000008701">
    <property type="component" value="Chromosome"/>
</dbReference>
<dbReference type="GO" id="GO:0005737">
    <property type="term" value="C:cytoplasm"/>
    <property type="evidence" value="ECO:0007669"/>
    <property type="project" value="UniProtKB-SubCell"/>
</dbReference>
<dbReference type="GO" id="GO:0016832">
    <property type="term" value="F:aldehyde-lyase activity"/>
    <property type="evidence" value="ECO:0007669"/>
    <property type="project" value="InterPro"/>
</dbReference>
<dbReference type="GO" id="GO:0004801">
    <property type="term" value="F:transaldolase activity"/>
    <property type="evidence" value="ECO:0007669"/>
    <property type="project" value="UniProtKB-UniRule"/>
</dbReference>
<dbReference type="GO" id="GO:0005975">
    <property type="term" value="P:carbohydrate metabolic process"/>
    <property type="evidence" value="ECO:0007669"/>
    <property type="project" value="InterPro"/>
</dbReference>
<dbReference type="GO" id="GO:0006098">
    <property type="term" value="P:pentose-phosphate shunt"/>
    <property type="evidence" value="ECO:0007669"/>
    <property type="project" value="UniProtKB-UniRule"/>
</dbReference>
<dbReference type="CDD" id="cd00956">
    <property type="entry name" value="Transaldolase_FSA"/>
    <property type="match status" value="1"/>
</dbReference>
<dbReference type="FunFam" id="3.20.20.70:FF:000018">
    <property type="entry name" value="Probable transaldolase"/>
    <property type="match status" value="1"/>
</dbReference>
<dbReference type="Gene3D" id="3.20.20.70">
    <property type="entry name" value="Aldolase class I"/>
    <property type="match status" value="1"/>
</dbReference>
<dbReference type="HAMAP" id="MF_00494">
    <property type="entry name" value="Transaldolase_3b"/>
    <property type="match status" value="1"/>
</dbReference>
<dbReference type="InterPro" id="IPR013785">
    <property type="entry name" value="Aldolase_TIM"/>
</dbReference>
<dbReference type="InterPro" id="IPR001585">
    <property type="entry name" value="TAL/FSA"/>
</dbReference>
<dbReference type="InterPro" id="IPR022999">
    <property type="entry name" value="Transaldolase_3B"/>
</dbReference>
<dbReference type="InterPro" id="IPR004731">
    <property type="entry name" value="Transaldolase_3B/F6P_aldolase"/>
</dbReference>
<dbReference type="InterPro" id="IPR018225">
    <property type="entry name" value="Transaldolase_AS"/>
</dbReference>
<dbReference type="InterPro" id="IPR033919">
    <property type="entry name" value="TSA/FSA_arc/bac"/>
</dbReference>
<dbReference type="NCBIfam" id="TIGR00875">
    <property type="entry name" value="fsa_talC_mipB"/>
    <property type="match status" value="1"/>
</dbReference>
<dbReference type="PANTHER" id="PTHR10683:SF40">
    <property type="entry name" value="FRUCTOSE-6-PHOSPHATE ALDOLASE 1-RELATED"/>
    <property type="match status" value="1"/>
</dbReference>
<dbReference type="PANTHER" id="PTHR10683">
    <property type="entry name" value="TRANSALDOLASE"/>
    <property type="match status" value="1"/>
</dbReference>
<dbReference type="Pfam" id="PF00923">
    <property type="entry name" value="TAL_FSA"/>
    <property type="match status" value="1"/>
</dbReference>
<dbReference type="SUPFAM" id="SSF51569">
    <property type="entry name" value="Aldolase"/>
    <property type="match status" value="1"/>
</dbReference>
<dbReference type="PROSITE" id="PS01054">
    <property type="entry name" value="TRANSALDOLASE_1"/>
    <property type="match status" value="1"/>
</dbReference>
<proteinExistence type="inferred from homology"/>
<keyword id="KW-0963">Cytoplasm</keyword>
<keyword id="KW-0570">Pentose shunt</keyword>
<keyword id="KW-1185">Reference proteome</keyword>
<keyword id="KW-0704">Schiff base</keyword>
<keyword id="KW-0808">Transferase</keyword>
<name>TAL_CHLPD</name>
<protein>
    <recommendedName>
        <fullName evidence="1">Probable transaldolase</fullName>
        <ecNumber evidence="1">2.2.1.2</ecNumber>
    </recommendedName>
</protein>
<accession>A1BJV5</accession>
<evidence type="ECO:0000255" key="1">
    <source>
        <dbReference type="HAMAP-Rule" id="MF_00494"/>
    </source>
</evidence>
<comment type="function">
    <text evidence="1">Transaldolase is important for the balance of metabolites in the pentose-phosphate pathway.</text>
</comment>
<comment type="catalytic activity">
    <reaction evidence="1">
        <text>D-sedoheptulose 7-phosphate + D-glyceraldehyde 3-phosphate = D-erythrose 4-phosphate + beta-D-fructose 6-phosphate</text>
        <dbReference type="Rhea" id="RHEA:17053"/>
        <dbReference type="ChEBI" id="CHEBI:16897"/>
        <dbReference type="ChEBI" id="CHEBI:57483"/>
        <dbReference type="ChEBI" id="CHEBI:57634"/>
        <dbReference type="ChEBI" id="CHEBI:59776"/>
        <dbReference type="EC" id="2.2.1.2"/>
    </reaction>
</comment>
<comment type="pathway">
    <text evidence="1">Carbohydrate degradation; pentose phosphate pathway; D-glyceraldehyde 3-phosphate and beta-D-fructose 6-phosphate from D-ribose 5-phosphate and D-xylulose 5-phosphate (non-oxidative stage): step 2/3.</text>
</comment>
<comment type="subcellular location">
    <subcellularLocation>
        <location evidence="1">Cytoplasm</location>
    </subcellularLocation>
</comment>
<comment type="similarity">
    <text evidence="1">Belongs to the transaldolase family. Type 3B subfamily.</text>
</comment>
<feature type="chain" id="PRO_1000126290" description="Probable transaldolase">
    <location>
        <begin position="1"/>
        <end position="226"/>
    </location>
</feature>
<feature type="active site" description="Schiff-base intermediate with substrate" evidence="1">
    <location>
        <position position="91"/>
    </location>
</feature>
<reference key="1">
    <citation type="submission" date="2006-12" db="EMBL/GenBank/DDBJ databases">
        <title>Complete sequence of Chlorobium phaeobacteroides DSM 266.</title>
        <authorList>
            <consortium name="US DOE Joint Genome Institute"/>
            <person name="Copeland A."/>
            <person name="Lucas S."/>
            <person name="Lapidus A."/>
            <person name="Barry K."/>
            <person name="Detter J.C."/>
            <person name="Glavina del Rio T."/>
            <person name="Hammon N."/>
            <person name="Israni S."/>
            <person name="Pitluck S."/>
            <person name="Goltsman E."/>
            <person name="Schmutz J."/>
            <person name="Larimer F."/>
            <person name="Land M."/>
            <person name="Hauser L."/>
            <person name="Mikhailova N."/>
            <person name="Li T."/>
            <person name="Overmann J."/>
            <person name="Bryant D.A."/>
            <person name="Richardson P."/>
        </authorList>
    </citation>
    <scope>NUCLEOTIDE SEQUENCE [LARGE SCALE GENOMIC DNA]</scope>
    <source>
        <strain>DSM 266 / SMG 266 / 2430</strain>
    </source>
</reference>
<gene>
    <name evidence="1" type="primary">tal</name>
    <name type="ordered locus">Cpha266_2698</name>
</gene>
<sequence length="226" mass="24497">MKFFIDTASLEEIQAAKDLGMLDGVTTNPSLIARIVGDASSFSYQDFREHIRRIAEIADGPVSAEVTTTDAEEMIHEGEALAAIHENVVVKCPLTIDGLKAIRHLSEKGIRTNATLVFSPNQALLAAKAGASYVSPFVGRLDDISTEGMALVEQIITIYDNYGYLTEVIVASIRHPRHVVESAMMGADIATIPFSVIRQLANHPLTDAGLKKFMEDAAILKKESDA</sequence>
<organism>
    <name type="scientific">Chlorobium phaeobacteroides (strain DSM 266 / SMG 266 / 2430)</name>
    <dbReference type="NCBI Taxonomy" id="290317"/>
    <lineage>
        <taxon>Bacteria</taxon>
        <taxon>Pseudomonadati</taxon>
        <taxon>Chlorobiota</taxon>
        <taxon>Chlorobiia</taxon>
        <taxon>Chlorobiales</taxon>
        <taxon>Chlorobiaceae</taxon>
        <taxon>Chlorobium/Pelodictyon group</taxon>
        <taxon>Chlorobium</taxon>
    </lineage>
</organism>